<sequence length="134" mass="15339">MRMLLHLSLLALGASYMYAIPTEIPTSALVKETLTLLSTHRTLLIGNETLRIPVPVHKHHQLCTEEIFQGIGTLESQTLQGGTVERLFKNLSLIKKYIDGQKKKCGEERRRVNQFLDYLQEFLGVMNTEWIIES</sequence>
<accession>P46685</accession>
<keyword id="KW-0202">Cytokine</keyword>
<keyword id="KW-1015">Disulfide bond</keyword>
<keyword id="KW-0325">Glycoprotein</keyword>
<keyword id="KW-0339">Growth factor</keyword>
<keyword id="KW-1185">Reference proteome</keyword>
<keyword id="KW-0964">Secreted</keyword>
<keyword id="KW-0732">Signal</keyword>
<evidence type="ECO:0000250" key="1"/>
<evidence type="ECO:0000250" key="2">
    <source>
        <dbReference type="UniProtKB" id="P04401"/>
    </source>
</evidence>
<evidence type="ECO:0000250" key="3">
    <source>
        <dbReference type="UniProtKB" id="P05113"/>
    </source>
</evidence>
<evidence type="ECO:0000255" key="4"/>
<evidence type="ECO:0000305" key="5"/>
<reference key="1">
    <citation type="journal article" date="1995" name="J. Immunol.">
        <title>Comparative sequence analysis of cytokine genes from human and nonhuman primates.</title>
        <authorList>
            <person name="Villinger F.J."/>
            <person name="Brar S.S."/>
            <person name="Mayne A.E."/>
            <person name="Chikkala N."/>
            <person name="Ansari A.A."/>
        </authorList>
    </citation>
    <scope>NUCLEOTIDE SEQUENCE [MRNA]</scope>
    <source>
        <strain>FUj</strain>
    </source>
</reference>
<comment type="function">
    <text evidence="2 3">Homodimeric cytokine expressed predominantly by T-lymphocytes and NK cells that plays an important role in the survival, differentiation, and chemotaxis of eosinophils. Also acts on activated and resting B-cells to induce immunoglobulin production, growth, and differentiation (By similarity). Mechanistically, exerts its biological effects through a receptor composed of IL5RA subunit and the cytokine receptor common subunit beta/CSF2RB. Binding to the receptor leads to activation of various kinases including LYN, SYK and JAK2 and thereby propagates signals through the RAS-MAPK and JAK-STAT5 pathways respectively (By similarity).</text>
</comment>
<comment type="subunit">
    <text evidence="2 3">Homodimer; disulfide-linked. Interacts with IL5RA. Interacts with CSF2RB.</text>
</comment>
<comment type="subcellular location">
    <subcellularLocation>
        <location evidence="2">Secreted</location>
    </subcellularLocation>
</comment>
<comment type="similarity">
    <text evidence="5">Belongs to the IL-5 family.</text>
</comment>
<feature type="signal peptide" evidence="1">
    <location>
        <begin position="1"/>
        <end position="19"/>
    </location>
</feature>
<feature type="chain" id="PRO_0000015557" description="Interleukin-5">
    <location>
        <begin position="20"/>
        <end position="134"/>
    </location>
</feature>
<feature type="glycosylation site" description="O-linked (GalNAc...) threonine" evidence="1">
    <location>
        <position position="22"/>
    </location>
</feature>
<feature type="glycosylation site" description="N-linked (GlcNAc...) asparagine" evidence="4">
    <location>
        <position position="47"/>
    </location>
</feature>
<feature type="glycosylation site" description="N-linked (GlcNAc...) asparagine" evidence="4">
    <location>
        <position position="90"/>
    </location>
</feature>
<feature type="disulfide bond" description="Interchain (with C-105)" evidence="1">
    <location>
        <position position="63"/>
    </location>
</feature>
<feature type="disulfide bond" description="Interchain (with C-63)" evidence="1">
    <location>
        <position position="105"/>
    </location>
</feature>
<gene>
    <name type="primary">IL5</name>
</gene>
<organism>
    <name type="scientific">Cercocebus atys</name>
    <name type="common">Sooty mangabey</name>
    <name type="synonym">Cercocebus torquatus atys</name>
    <dbReference type="NCBI Taxonomy" id="9531"/>
    <lineage>
        <taxon>Eukaryota</taxon>
        <taxon>Metazoa</taxon>
        <taxon>Chordata</taxon>
        <taxon>Craniata</taxon>
        <taxon>Vertebrata</taxon>
        <taxon>Euteleostomi</taxon>
        <taxon>Mammalia</taxon>
        <taxon>Eutheria</taxon>
        <taxon>Euarchontoglires</taxon>
        <taxon>Primates</taxon>
        <taxon>Haplorrhini</taxon>
        <taxon>Catarrhini</taxon>
        <taxon>Cercopithecidae</taxon>
        <taxon>Cercopithecinae</taxon>
        <taxon>Cercocebus</taxon>
    </lineage>
</organism>
<name>IL5_CERAT</name>
<dbReference type="EMBL" id="L26033">
    <property type="protein sequence ID" value="AAA99971.1"/>
    <property type="molecule type" value="mRNA"/>
</dbReference>
<dbReference type="SMR" id="P46685"/>
<dbReference type="STRING" id="9531.ENSCATP00000016781"/>
<dbReference type="GlyCosmos" id="P46685">
    <property type="glycosylation" value="3 sites, No reported glycans"/>
</dbReference>
<dbReference type="Proteomes" id="UP000233060">
    <property type="component" value="Unassembled WGS sequence"/>
</dbReference>
<dbReference type="GO" id="GO:0005615">
    <property type="term" value="C:extracellular space"/>
    <property type="evidence" value="ECO:0007669"/>
    <property type="project" value="UniProtKB-KW"/>
</dbReference>
<dbReference type="GO" id="GO:0005125">
    <property type="term" value="F:cytokine activity"/>
    <property type="evidence" value="ECO:0007669"/>
    <property type="project" value="UniProtKB-KW"/>
</dbReference>
<dbReference type="GO" id="GO:0008083">
    <property type="term" value="F:growth factor activity"/>
    <property type="evidence" value="ECO:0007669"/>
    <property type="project" value="UniProtKB-KW"/>
</dbReference>
<dbReference type="GO" id="GO:0005137">
    <property type="term" value="F:interleukin-5 receptor binding"/>
    <property type="evidence" value="ECO:0007669"/>
    <property type="project" value="InterPro"/>
</dbReference>
<dbReference type="GO" id="GO:0006955">
    <property type="term" value="P:immune response"/>
    <property type="evidence" value="ECO:0007669"/>
    <property type="project" value="InterPro"/>
</dbReference>
<dbReference type="FunFam" id="1.20.1250.10:FF:000034">
    <property type="entry name" value="Interleukin-5"/>
    <property type="match status" value="1"/>
</dbReference>
<dbReference type="Gene3D" id="1.20.1250.10">
    <property type="match status" value="1"/>
</dbReference>
<dbReference type="InterPro" id="IPR009079">
    <property type="entry name" value="4_helix_cytokine-like_core"/>
</dbReference>
<dbReference type="InterPro" id="IPR000186">
    <property type="entry name" value="IL-5"/>
</dbReference>
<dbReference type="PANTHER" id="PTHR48491">
    <property type="entry name" value="INTERLEUKIN-5"/>
    <property type="match status" value="1"/>
</dbReference>
<dbReference type="PANTHER" id="PTHR48491:SF1">
    <property type="entry name" value="INTERLEUKIN-5"/>
    <property type="match status" value="1"/>
</dbReference>
<dbReference type="Pfam" id="PF02025">
    <property type="entry name" value="IL5"/>
    <property type="match status" value="1"/>
</dbReference>
<dbReference type="PRINTS" id="PR00432">
    <property type="entry name" value="INTERLEUKIN5"/>
</dbReference>
<dbReference type="SUPFAM" id="SSF47266">
    <property type="entry name" value="4-helical cytokines"/>
    <property type="match status" value="1"/>
</dbReference>
<protein>
    <recommendedName>
        <fullName>Interleukin-5</fullName>
        <shortName>IL-5</shortName>
    </recommendedName>
    <alternativeName>
        <fullName>Eosinophil differentiation factor</fullName>
    </alternativeName>
    <alternativeName>
        <fullName>T-cell replacing factor</fullName>
        <shortName>TRF</shortName>
    </alternativeName>
</protein>
<proteinExistence type="evidence at transcript level"/>